<organism>
    <name type="scientific">Saccharomyces cerevisiae (strain ATCC 204508 / S288c)</name>
    <name type="common">Baker's yeast</name>
    <dbReference type="NCBI Taxonomy" id="559292"/>
    <lineage>
        <taxon>Eukaryota</taxon>
        <taxon>Fungi</taxon>
        <taxon>Dikarya</taxon>
        <taxon>Ascomycota</taxon>
        <taxon>Saccharomycotina</taxon>
        <taxon>Saccharomycetes</taxon>
        <taxon>Saccharomycetales</taxon>
        <taxon>Saccharomycetaceae</taxon>
        <taxon>Saccharomyces</taxon>
    </lineage>
</organism>
<proteinExistence type="evidence at protein level"/>
<feature type="chain" id="PRO_0000051088" description="NET1-associated nuclear protein 1">
    <location>
        <begin position="1"/>
        <end position="896"/>
    </location>
</feature>
<feature type="repeat" description="WD 1">
    <location>
        <begin position="295"/>
        <end position="334"/>
    </location>
</feature>
<feature type="repeat" description="WD 2">
    <location>
        <begin position="490"/>
        <end position="542"/>
    </location>
</feature>
<feature type="repeat" description="WD 3">
    <location>
        <begin position="552"/>
        <end position="595"/>
    </location>
</feature>
<feature type="repeat" description="WD 4">
    <location>
        <begin position="605"/>
        <end position="645"/>
    </location>
</feature>
<accession>Q02931</accession>
<accession>D6W3P1</accession>
<protein>
    <recommendedName>
        <fullName>NET1-associated nuclear protein 1</fullName>
    </recommendedName>
    <alternativeName>
        <fullName>U three protein 17</fullName>
        <shortName>t-17</shortName>
    </alternativeName>
    <alternativeName>
        <fullName>U3 protein 17 required for transcription</fullName>
    </alternativeName>
    <alternativeName>
        <fullName>U3 small nucleolar RNA-associated protein 17</fullName>
        <shortName>U3 snoRNA-associated protein 17</shortName>
    </alternativeName>
</protein>
<name>UTP17_YEAST</name>
<gene>
    <name type="primary">NAN1</name>
    <name type="synonym">UTP17</name>
    <name type="ordered locus">YPL126W</name>
</gene>
<evidence type="ECO:0000269" key="1">
    <source>
    </source>
</evidence>
<evidence type="ECO:0000269" key="2">
    <source>
    </source>
</evidence>
<evidence type="ECO:0000269" key="3">
    <source>
    </source>
</evidence>
<dbReference type="EMBL" id="U43503">
    <property type="protein sequence ID" value="AAB68236.1"/>
    <property type="molecule type" value="Genomic_DNA"/>
</dbReference>
<dbReference type="EMBL" id="BK006949">
    <property type="protein sequence ID" value="DAA11307.1"/>
    <property type="molecule type" value="Genomic_DNA"/>
</dbReference>
<dbReference type="PIR" id="S61996">
    <property type="entry name" value="S61996"/>
</dbReference>
<dbReference type="RefSeq" id="NP_015199.1">
    <property type="nucleotide sequence ID" value="NM_001183940.1"/>
</dbReference>
<dbReference type="PDB" id="5WLC">
    <property type="method" value="EM"/>
    <property type="resolution" value="3.80 A"/>
    <property type="chains" value="LH=1-896"/>
</dbReference>
<dbReference type="PDB" id="6KE6">
    <property type="method" value="EM"/>
    <property type="resolution" value="3.40 A"/>
    <property type="chains" value="AG=1-896"/>
</dbReference>
<dbReference type="PDB" id="6LQP">
    <property type="method" value="EM"/>
    <property type="resolution" value="3.20 A"/>
    <property type="chains" value="AG=1-896"/>
</dbReference>
<dbReference type="PDB" id="6LQQ">
    <property type="method" value="EM"/>
    <property type="resolution" value="4.10 A"/>
    <property type="chains" value="AG=1-896"/>
</dbReference>
<dbReference type="PDB" id="6LQR">
    <property type="method" value="EM"/>
    <property type="resolution" value="8.60 A"/>
    <property type="chains" value="AG=1-896"/>
</dbReference>
<dbReference type="PDB" id="6LQS">
    <property type="method" value="EM"/>
    <property type="resolution" value="3.80 A"/>
    <property type="chains" value="AG=1-896"/>
</dbReference>
<dbReference type="PDB" id="6LQT">
    <property type="method" value="EM"/>
    <property type="resolution" value="4.90 A"/>
    <property type="chains" value="AG=1-896"/>
</dbReference>
<dbReference type="PDB" id="6LQU">
    <property type="method" value="EM"/>
    <property type="resolution" value="3.70 A"/>
    <property type="chains" value="AG=1-896"/>
</dbReference>
<dbReference type="PDB" id="6LQV">
    <property type="method" value="EM"/>
    <property type="resolution" value="4.80 A"/>
    <property type="chains" value="AG=1-896"/>
</dbReference>
<dbReference type="PDB" id="6ND4">
    <property type="method" value="EM"/>
    <property type="resolution" value="4.30 A"/>
    <property type="chains" value="H=1-896"/>
</dbReference>
<dbReference type="PDB" id="6ZQA">
    <property type="method" value="EM"/>
    <property type="resolution" value="4.40 A"/>
    <property type="chains" value="UQ=1-896"/>
</dbReference>
<dbReference type="PDB" id="6ZQB">
    <property type="method" value="EM"/>
    <property type="resolution" value="3.90 A"/>
    <property type="chains" value="UQ=1-896"/>
</dbReference>
<dbReference type="PDB" id="6ZQC">
    <property type="method" value="EM"/>
    <property type="resolution" value="3.80 A"/>
    <property type="chains" value="UQ=1-896"/>
</dbReference>
<dbReference type="PDB" id="6ZQD">
    <property type="method" value="EM"/>
    <property type="resolution" value="3.80 A"/>
    <property type="chains" value="UQ=1-896"/>
</dbReference>
<dbReference type="PDB" id="6ZQE">
    <property type="method" value="EM"/>
    <property type="resolution" value="7.10 A"/>
    <property type="chains" value="UQ=1-896"/>
</dbReference>
<dbReference type="PDB" id="7AJT">
    <property type="method" value="EM"/>
    <property type="resolution" value="4.60 A"/>
    <property type="chains" value="UQ=1-896"/>
</dbReference>
<dbReference type="PDB" id="7AJU">
    <property type="method" value="EM"/>
    <property type="resolution" value="3.80 A"/>
    <property type="chains" value="UQ=1-896"/>
</dbReference>
<dbReference type="PDB" id="7D4I">
    <property type="method" value="EM"/>
    <property type="resolution" value="4.00 A"/>
    <property type="chains" value="AG=1-896"/>
</dbReference>
<dbReference type="PDB" id="7D5S">
    <property type="method" value="EM"/>
    <property type="resolution" value="4.60 A"/>
    <property type="chains" value="AG=1-896"/>
</dbReference>
<dbReference type="PDB" id="7D5T">
    <property type="method" value="EM"/>
    <property type="resolution" value="6.00 A"/>
    <property type="chains" value="AG=1-896"/>
</dbReference>
<dbReference type="PDB" id="7D63">
    <property type="method" value="EM"/>
    <property type="resolution" value="12.30 A"/>
    <property type="chains" value="AG=1-896"/>
</dbReference>
<dbReference type="PDB" id="7SUK">
    <property type="method" value="EM"/>
    <property type="resolution" value="3.99 A"/>
    <property type="chains" value="LH=1-896"/>
</dbReference>
<dbReference type="PDBsum" id="5WLC"/>
<dbReference type="PDBsum" id="6KE6"/>
<dbReference type="PDBsum" id="6LQP"/>
<dbReference type="PDBsum" id="6LQQ"/>
<dbReference type="PDBsum" id="6LQR"/>
<dbReference type="PDBsum" id="6LQS"/>
<dbReference type="PDBsum" id="6LQT"/>
<dbReference type="PDBsum" id="6LQU"/>
<dbReference type="PDBsum" id="6LQV"/>
<dbReference type="PDBsum" id="6ND4"/>
<dbReference type="PDBsum" id="6ZQA"/>
<dbReference type="PDBsum" id="6ZQB"/>
<dbReference type="PDBsum" id="6ZQC"/>
<dbReference type="PDBsum" id="6ZQD"/>
<dbReference type="PDBsum" id="6ZQE"/>
<dbReference type="PDBsum" id="7AJT"/>
<dbReference type="PDBsum" id="7AJU"/>
<dbReference type="PDBsum" id="7D4I"/>
<dbReference type="PDBsum" id="7D5S"/>
<dbReference type="PDBsum" id="7D5T"/>
<dbReference type="PDBsum" id="7D63"/>
<dbReference type="PDBsum" id="7SUK"/>
<dbReference type="EMDB" id="EMD-0949"/>
<dbReference type="EMDB" id="EMD-0950"/>
<dbReference type="EMDB" id="EMD-0951"/>
<dbReference type="EMDB" id="EMD-0952"/>
<dbReference type="EMDB" id="EMD-0953"/>
<dbReference type="EMDB" id="EMD-0954"/>
<dbReference type="EMDB" id="EMD-0955"/>
<dbReference type="EMDB" id="EMD-11357"/>
<dbReference type="EMDB" id="EMD-11358"/>
<dbReference type="EMDB" id="EMD-11359"/>
<dbReference type="EMDB" id="EMD-11360"/>
<dbReference type="EMDB" id="EMD-11361"/>
<dbReference type="EMDB" id="EMD-11807"/>
<dbReference type="EMDB" id="EMD-11808"/>
<dbReference type="EMDB" id="EMD-25441"/>
<dbReference type="EMDB" id="EMD-30574"/>
<dbReference type="EMDB" id="EMD-30584"/>
<dbReference type="EMDB" id="EMD-30585"/>
<dbReference type="EMDB" id="EMD-30588"/>
<dbReference type="EMDB" id="EMD-8859"/>
<dbReference type="EMDB" id="EMD-9964"/>
<dbReference type="SMR" id="Q02931"/>
<dbReference type="BioGRID" id="36055">
    <property type="interactions" value="149"/>
</dbReference>
<dbReference type="ComplexPortal" id="CPX-1409">
    <property type="entry name" value="UTP-A complex"/>
</dbReference>
<dbReference type="DIP" id="DIP-3999N"/>
<dbReference type="FunCoup" id="Q02931">
    <property type="interactions" value="535"/>
</dbReference>
<dbReference type="IntAct" id="Q02931">
    <property type="interactions" value="95"/>
</dbReference>
<dbReference type="MINT" id="Q02931"/>
<dbReference type="STRING" id="4932.YPL126W"/>
<dbReference type="iPTMnet" id="Q02931"/>
<dbReference type="PaxDb" id="4932-YPL126W"/>
<dbReference type="PeptideAtlas" id="Q02931"/>
<dbReference type="EnsemblFungi" id="YPL126W_mRNA">
    <property type="protein sequence ID" value="YPL126W"/>
    <property type="gene ID" value="YPL126W"/>
</dbReference>
<dbReference type="GeneID" id="855977"/>
<dbReference type="KEGG" id="sce:YPL126W"/>
<dbReference type="AGR" id="SGD:S000006047"/>
<dbReference type="SGD" id="S000006047">
    <property type="gene designation" value="NAN1"/>
</dbReference>
<dbReference type="VEuPathDB" id="FungiDB:YPL126W"/>
<dbReference type="eggNOG" id="KOG1963">
    <property type="taxonomic scope" value="Eukaryota"/>
</dbReference>
<dbReference type="HOGENOM" id="CLU_348179_0_0_1"/>
<dbReference type="InParanoid" id="Q02931"/>
<dbReference type="OMA" id="KWHIDSV"/>
<dbReference type="OrthoDB" id="4096at2759"/>
<dbReference type="BioCyc" id="YEAST:G3O-34025-MONOMER"/>
<dbReference type="Reactome" id="R-SCE-6791226">
    <property type="pathway name" value="Major pathway of rRNA processing in the nucleolus and cytosol"/>
</dbReference>
<dbReference type="BioGRID-ORCS" id="855977">
    <property type="hits" value="1 hit in 10 CRISPR screens"/>
</dbReference>
<dbReference type="PRO" id="PR:Q02931"/>
<dbReference type="Proteomes" id="UP000002311">
    <property type="component" value="Chromosome XVI"/>
</dbReference>
<dbReference type="RNAct" id="Q02931">
    <property type="molecule type" value="protein"/>
</dbReference>
<dbReference type="GO" id="GO:0030686">
    <property type="term" value="C:90S preribosome"/>
    <property type="evidence" value="ECO:0007005"/>
    <property type="project" value="SGD"/>
</dbReference>
<dbReference type="GO" id="GO:0005730">
    <property type="term" value="C:nucleolus"/>
    <property type="evidence" value="ECO:0000314"/>
    <property type="project" value="SGD"/>
</dbReference>
<dbReference type="GO" id="GO:0005654">
    <property type="term" value="C:nucleoplasm"/>
    <property type="evidence" value="ECO:0000304"/>
    <property type="project" value="Reactome"/>
</dbReference>
<dbReference type="GO" id="GO:0005777">
    <property type="term" value="C:peroxisome"/>
    <property type="evidence" value="ECO:0000314"/>
    <property type="project" value="SGD"/>
</dbReference>
<dbReference type="GO" id="GO:0033553">
    <property type="term" value="C:rDNA heterochromatin"/>
    <property type="evidence" value="ECO:0000314"/>
    <property type="project" value="SGD"/>
</dbReference>
<dbReference type="GO" id="GO:0032040">
    <property type="term" value="C:small-subunit processome"/>
    <property type="evidence" value="ECO:0000314"/>
    <property type="project" value="SGD"/>
</dbReference>
<dbReference type="GO" id="GO:0034455">
    <property type="term" value="C:t-UTP complex"/>
    <property type="evidence" value="ECO:0000314"/>
    <property type="project" value="SGD"/>
</dbReference>
<dbReference type="GO" id="GO:0003729">
    <property type="term" value="F:mRNA binding"/>
    <property type="evidence" value="ECO:0007005"/>
    <property type="project" value="SGD"/>
</dbReference>
<dbReference type="GO" id="GO:0003723">
    <property type="term" value="F:RNA binding"/>
    <property type="evidence" value="ECO:0000318"/>
    <property type="project" value="GO_Central"/>
</dbReference>
<dbReference type="GO" id="GO:0034511">
    <property type="term" value="F:U3 snoRNA binding"/>
    <property type="evidence" value="ECO:0000314"/>
    <property type="project" value="SGD"/>
</dbReference>
<dbReference type="GO" id="GO:0030490">
    <property type="term" value="P:maturation of SSU-rRNA"/>
    <property type="evidence" value="ECO:0000303"/>
    <property type="project" value="ComplexPortal"/>
</dbReference>
<dbReference type="GO" id="GO:0000462">
    <property type="term" value="P:maturation of SSU-rRNA from tricistronic rRNA transcript (SSU-rRNA, 5.8S rRNA, LSU-rRNA)"/>
    <property type="evidence" value="ECO:0000315"/>
    <property type="project" value="SGD"/>
</dbReference>
<dbReference type="GO" id="GO:2000234">
    <property type="term" value="P:positive regulation of rRNA processing"/>
    <property type="evidence" value="ECO:0000318"/>
    <property type="project" value="GO_Central"/>
</dbReference>
<dbReference type="GO" id="GO:0045943">
    <property type="term" value="P:positive regulation of transcription by RNA polymerase I"/>
    <property type="evidence" value="ECO:0000315"/>
    <property type="project" value="SGD"/>
</dbReference>
<dbReference type="Gene3D" id="2.130.10.10">
    <property type="entry name" value="YVTN repeat-like/Quinoprotein amine dehydrogenase"/>
    <property type="match status" value="2"/>
</dbReference>
<dbReference type="InterPro" id="IPR015943">
    <property type="entry name" value="WD40/YVTN_repeat-like_dom_sf"/>
</dbReference>
<dbReference type="InterPro" id="IPR036322">
    <property type="entry name" value="WD40_repeat_dom_sf"/>
</dbReference>
<dbReference type="InterPro" id="IPR001680">
    <property type="entry name" value="WD40_rpt"/>
</dbReference>
<dbReference type="InterPro" id="IPR053826">
    <property type="entry name" value="WDR75"/>
</dbReference>
<dbReference type="PANTHER" id="PTHR44215">
    <property type="entry name" value="WD REPEAT-CONTAINING PROTEIN 75"/>
    <property type="match status" value="1"/>
</dbReference>
<dbReference type="PANTHER" id="PTHR44215:SF1">
    <property type="entry name" value="WD REPEAT-CONTAINING PROTEIN 75"/>
    <property type="match status" value="1"/>
</dbReference>
<dbReference type="Pfam" id="PF00400">
    <property type="entry name" value="WD40"/>
    <property type="match status" value="1"/>
</dbReference>
<dbReference type="SMART" id="SM00320">
    <property type="entry name" value="WD40"/>
    <property type="match status" value="3"/>
</dbReference>
<dbReference type="SUPFAM" id="SSF50993">
    <property type="entry name" value="Peptidase/esterase 'gauge' domain"/>
    <property type="match status" value="1"/>
</dbReference>
<dbReference type="SUPFAM" id="SSF50978">
    <property type="entry name" value="WD40 repeat-like"/>
    <property type="match status" value="1"/>
</dbReference>
<dbReference type="PROSITE" id="PS50082">
    <property type="entry name" value="WD_REPEATS_2"/>
    <property type="match status" value="1"/>
</dbReference>
<dbReference type="PROSITE" id="PS50294">
    <property type="entry name" value="WD_REPEATS_REGION"/>
    <property type="match status" value="1"/>
</dbReference>
<keyword id="KW-0002">3D-structure</keyword>
<keyword id="KW-0539">Nucleus</keyword>
<keyword id="KW-1185">Reference proteome</keyword>
<keyword id="KW-0677">Repeat</keyword>
<keyword id="KW-0687">Ribonucleoprotein</keyword>
<keyword id="KW-0690">Ribosome biogenesis</keyword>
<keyword id="KW-0698">rRNA processing</keyword>
<keyword id="KW-0804">Transcription</keyword>
<keyword id="KW-0853">WD repeat</keyword>
<reference key="1">
    <citation type="journal article" date="1997" name="Nature">
        <title>The nucleotide sequence of Saccharomyces cerevisiae chromosome XVI.</title>
        <authorList>
            <person name="Bussey H."/>
            <person name="Storms R.K."/>
            <person name="Ahmed A."/>
            <person name="Albermann K."/>
            <person name="Allen E."/>
            <person name="Ansorge W."/>
            <person name="Araujo R."/>
            <person name="Aparicio A."/>
            <person name="Barrell B.G."/>
            <person name="Badcock K."/>
            <person name="Benes V."/>
            <person name="Botstein D."/>
            <person name="Bowman S."/>
            <person name="Brueckner M."/>
            <person name="Carpenter J."/>
            <person name="Cherry J.M."/>
            <person name="Chung E."/>
            <person name="Churcher C.M."/>
            <person name="Coster F."/>
            <person name="Davis K."/>
            <person name="Davis R.W."/>
            <person name="Dietrich F.S."/>
            <person name="Delius H."/>
            <person name="DiPaolo T."/>
            <person name="Dubois E."/>
            <person name="Duesterhoeft A."/>
            <person name="Duncan M."/>
            <person name="Floeth M."/>
            <person name="Fortin N."/>
            <person name="Friesen J.D."/>
            <person name="Fritz C."/>
            <person name="Goffeau A."/>
            <person name="Hall J."/>
            <person name="Hebling U."/>
            <person name="Heumann K."/>
            <person name="Hilbert H."/>
            <person name="Hillier L.W."/>
            <person name="Hunicke-Smith S."/>
            <person name="Hyman R.W."/>
            <person name="Johnston M."/>
            <person name="Kalman S."/>
            <person name="Kleine K."/>
            <person name="Komp C."/>
            <person name="Kurdi O."/>
            <person name="Lashkari D."/>
            <person name="Lew H."/>
            <person name="Lin A."/>
            <person name="Lin D."/>
            <person name="Louis E.J."/>
            <person name="Marathe R."/>
            <person name="Messenguy F."/>
            <person name="Mewes H.-W."/>
            <person name="Mirtipati S."/>
            <person name="Moestl D."/>
            <person name="Mueller-Auer S."/>
            <person name="Namath A."/>
            <person name="Nentwich U."/>
            <person name="Oefner P."/>
            <person name="Pearson D."/>
            <person name="Petel F.X."/>
            <person name="Pohl T.M."/>
            <person name="Purnelle B."/>
            <person name="Rajandream M.A."/>
            <person name="Rechmann S."/>
            <person name="Rieger M."/>
            <person name="Riles L."/>
            <person name="Roberts D."/>
            <person name="Schaefer M."/>
            <person name="Scharfe M."/>
            <person name="Scherens B."/>
            <person name="Schramm S."/>
            <person name="Schroeder M."/>
            <person name="Sdicu A.-M."/>
            <person name="Tettelin H."/>
            <person name="Urrestarazu L.A."/>
            <person name="Ushinsky S."/>
            <person name="Vierendeels F."/>
            <person name="Vissers S."/>
            <person name="Voss H."/>
            <person name="Walsh S.V."/>
            <person name="Wambutt R."/>
            <person name="Wang Y."/>
            <person name="Wedler E."/>
            <person name="Wedler H."/>
            <person name="Winnett E."/>
            <person name="Zhong W.-W."/>
            <person name="Zollner A."/>
            <person name="Vo D.H."/>
            <person name="Hani J."/>
        </authorList>
    </citation>
    <scope>NUCLEOTIDE SEQUENCE [LARGE SCALE GENOMIC DNA]</scope>
    <source>
        <strain>ATCC 204508 / S288c</strain>
    </source>
</reference>
<reference key="2">
    <citation type="journal article" date="2014" name="G3 (Bethesda)">
        <title>The reference genome sequence of Saccharomyces cerevisiae: Then and now.</title>
        <authorList>
            <person name="Engel S.R."/>
            <person name="Dietrich F.S."/>
            <person name="Fisk D.G."/>
            <person name="Binkley G."/>
            <person name="Balakrishnan R."/>
            <person name="Costanzo M.C."/>
            <person name="Dwight S.S."/>
            <person name="Hitz B.C."/>
            <person name="Karra K."/>
            <person name="Nash R.S."/>
            <person name="Weng S."/>
            <person name="Wong E.D."/>
            <person name="Lloyd P."/>
            <person name="Skrzypek M.S."/>
            <person name="Miyasato S.R."/>
            <person name="Simison M."/>
            <person name="Cherry J.M."/>
        </authorList>
    </citation>
    <scope>GENOME REANNOTATION</scope>
    <source>
        <strain>ATCC 204508 / S288c</strain>
    </source>
</reference>
<reference key="3">
    <citation type="journal article" date="2002" name="Nature">
        <title>A large nucleolar U3 ribonucleoprotein required for 18S ribosomal RNA biogenesis.</title>
        <authorList>
            <person name="Dragon F."/>
            <person name="Gallagher J.E.G."/>
            <person name="Compagnone-Post P.A."/>
            <person name="Mitchell B.M."/>
            <person name="Porwancher K.A."/>
            <person name="Wehner K.A."/>
            <person name="Wormsley S."/>
            <person name="Settlage R.E."/>
            <person name="Shabanowitz J."/>
            <person name="Osheim Y."/>
            <person name="Beyer A.L."/>
            <person name="Hunt D.F."/>
            <person name="Baserga S.J."/>
        </authorList>
    </citation>
    <scope>FUNCTION</scope>
    <scope>INTERACTION WITH MPP10 AND SNORNA U3</scope>
    <scope>IDENTIFICATION IN SSU PROCESSOME BY MASS SPECTROMETRY</scope>
    <scope>SUBCELLULAR LOCATION</scope>
</reference>
<reference key="4">
    <citation type="journal article" date="2003" name="Nature">
        <title>Global analysis of protein expression in yeast.</title>
        <authorList>
            <person name="Ghaemmaghami S."/>
            <person name="Huh W.-K."/>
            <person name="Bower K."/>
            <person name="Howson R.W."/>
            <person name="Belle A."/>
            <person name="Dephoure N."/>
            <person name="O'Shea E.K."/>
            <person name="Weissman J.S."/>
        </authorList>
    </citation>
    <scope>LEVEL OF PROTEIN EXPRESSION [LARGE SCALE ANALYSIS]</scope>
</reference>
<reference key="5">
    <citation type="journal article" date="2004" name="Genes Dev.">
        <title>RNA polymerase I transcription and pre-rRNA processing are linked by specific SSU processome components.</title>
        <authorList>
            <person name="Gallagher J.E.G."/>
            <person name="Dunbar D.A."/>
            <person name="Granneman S."/>
            <person name="Mitchell B.M."/>
            <person name="Osheim Y."/>
            <person name="Beyer A.L."/>
            <person name="Baserga S.J."/>
        </authorList>
    </citation>
    <scope>FUNCTION</scope>
    <scope>IDENTIFICATION IN COMPLEX WITH OTHER T-UTPS</scope>
    <scope>SUBCELLULAR LOCATION</scope>
</reference>
<reference key="6">
    <citation type="journal article" date="2008" name="Mol. Cell. Proteomics">
        <title>A multidimensional chromatography technology for in-depth phosphoproteome analysis.</title>
        <authorList>
            <person name="Albuquerque C.P."/>
            <person name="Smolka M.B."/>
            <person name="Payne S.H."/>
            <person name="Bafna V."/>
            <person name="Eng J."/>
            <person name="Zhou H."/>
        </authorList>
    </citation>
    <scope>IDENTIFICATION BY MASS SPECTROMETRY [LARGE SCALE ANALYSIS]</scope>
</reference>
<comment type="function">
    <text evidence="1 3">Involved in nucleolar processing of pre-18S ribosomal RNA. Required for optimal pre-ribosomal RNA transcription by RNA polymerase I together with a subset of U3 proteins required for transcription (t-UTPs).</text>
</comment>
<comment type="subunit">
    <text evidence="1 3">Interacts with snoRNA U3. Interacts with MPP10. Component of the ribosomal small subunit (SSU) processome composed of at least 40 protein subunits and snoRNA U3. In the absence of snoRNA3, forms a complex with other t-UTPs. This complex can associate with pre-18S ribosomal RNAs.</text>
</comment>
<comment type="interaction">
    <interactant intactId="EBI-37773">
        <id>Q02931</id>
    </interactant>
    <interactant intactId="EBI-31770">
        <id>Q12481</id>
        <label>RRP36</label>
    </interactant>
    <organismsDiffer>false</organismsDiffer>
    <experiments>2</experiments>
</comment>
<comment type="interaction">
    <interactant intactId="EBI-37773">
        <id>Q02931</id>
    </interactant>
    <interactant intactId="EBI-1884">
        <id>P42945</id>
        <label>UTP10</label>
    </interactant>
    <organismsDiffer>false</organismsDiffer>
    <experiments>8</experiments>
</comment>
<comment type="interaction">
    <interactant intactId="EBI-37773">
        <id>Q02931</id>
    </interactant>
    <interactant intactId="EBI-23301">
        <id>P53276</id>
        <label>UTP8</label>
    </interactant>
    <organismsDiffer>false</organismsDiffer>
    <experiments>6</experiments>
</comment>
<comment type="subcellular location">
    <subcellularLocation>
        <location evidence="1 3">Nucleus</location>
        <location evidence="1 3">Nucleolus</location>
    </subcellularLocation>
    <text>Associated with ribosomal chromatin, even in the absence of transcription.</text>
</comment>
<comment type="miscellaneous">
    <text evidence="2">Present with 6560 molecules/cell in log phase SD medium.</text>
</comment>
<sequence>MTQSLGIEQYKLSVVSGGKPALNNLSSVTGNKNIARLSQDQRNYIIPFNNQIKVYSVETRQCVKTLKFANNSLLSGIFLQEEENNESIVKILLGDITVPQQEDAHLITVFTNNGHVIVLNYKGKLVESPKHFKISLADEKLANVFHSEGNYRILTTFKDPSQKAHNSLQSYRLYALTFDDAKKQFEVAHQAEWHNVILSNISSNGKLLAHMCKDVSTKDHEHKSISVVSLFDDSVNLSFPLGSILSSQTQSLSYNTRYVSSMAIDNMGQQLAVGFASGVISIVSLADLQIRLLKWHIDSVLSLSFSHDGSYLLSGGWEKVMSLWQLETNSQQFLPRLNGIIIDCQVLGPQGNYYSLILQMTENNSNSDYQFLLLNASDLTSKLSINGPLPVFNSTIKHIQQPISAMNTKNSNSITSLNHSKKKQSRKLIKSRRQDFTTNVEINPINKNLYFPHISAVQIFDFYKNEQVNYQYLTSGVNNSMGKVRFELNLQDPIITDLKFTKDGQWMITYEIEYPPNDLLSSKDLTHILKFWTKNDNETNWNLKTKVINPHGISVPITKILPSPRSVNNSQGCLTADNNGGLKFWSFDSHESNWCLKKISLPNFNHFSNSVSLAWSQDGSLIFHGFDDKLQILDFDTFKKFESLENTKTVSEFTLDSEIQTVKLINDTNLIVATRTTLNAINLLRGQVINSFDLYPFVNGVYKNGHMDRLITCDERTGNIALVINQQLTDLDGVPTINYKSRIIIFDSDLSTKLGNFTHHEYISWIGWNYDTDFIFLDIESTLGVVGTTVNTQLSDEVNNEGILDGLVSNTITTSASNSDIFAEQLHKLSSRGKKSDTRDKNTNDNDEDEEDIALEFINGEKKDKLVNMNSFTSMFDNIQNVQMDTFFDRVMKVLT</sequence>